<keyword id="KW-0256">Endoplasmic reticulum</keyword>
<keyword id="KW-0333">Golgi apparatus</keyword>
<keyword id="KW-0378">Hydrolase</keyword>
<keyword id="KW-0472">Membrane</keyword>
<keyword id="KW-1185">Reference proteome</keyword>
<keyword id="KW-0812">Transmembrane</keyword>
<keyword id="KW-1133">Transmembrane helix</keyword>
<feature type="chain" id="PRO_0000411671" description="Probable isoprenylcysteine alpha-carbonyl methylesterase ICME">
    <location>
        <begin position="1"/>
        <end position="414"/>
    </location>
</feature>
<feature type="transmembrane region" description="Helical" evidence="2">
    <location>
        <begin position="90"/>
        <end position="110"/>
    </location>
</feature>
<feature type="transmembrane region" description="Helical" evidence="2">
    <location>
        <begin position="145"/>
        <end position="165"/>
    </location>
</feature>
<feature type="region of interest" description="Disordered" evidence="3">
    <location>
        <begin position="1"/>
        <end position="54"/>
    </location>
</feature>
<feature type="active site" evidence="4">
    <location>
        <position position="223"/>
    </location>
</feature>
<feature type="active site" evidence="4">
    <location>
        <position position="323"/>
    </location>
</feature>
<feature type="active site" evidence="4">
    <location>
        <position position="355"/>
    </location>
</feature>
<feature type="binding site" evidence="2">
    <location>
        <begin position="151"/>
        <end position="153"/>
    </location>
    <ligand>
        <name>substrate</name>
    </ligand>
</feature>
<feature type="binding site" evidence="2">
    <location>
        <begin position="222"/>
        <end position="224"/>
    </location>
    <ligand>
        <name>substrate</name>
    </ligand>
</feature>
<evidence type="ECO:0000250" key="1"/>
<evidence type="ECO:0000255" key="2"/>
<evidence type="ECO:0000256" key="3">
    <source>
        <dbReference type="SAM" id="MobiDB-lite"/>
    </source>
</evidence>
<evidence type="ECO:0000305" key="4"/>
<proteinExistence type="evidence at transcript level"/>
<organism>
    <name type="scientific">Oryza sativa subsp. japonica</name>
    <name type="common">Rice</name>
    <dbReference type="NCBI Taxonomy" id="39947"/>
    <lineage>
        <taxon>Eukaryota</taxon>
        <taxon>Viridiplantae</taxon>
        <taxon>Streptophyta</taxon>
        <taxon>Embryophyta</taxon>
        <taxon>Tracheophyta</taxon>
        <taxon>Spermatophyta</taxon>
        <taxon>Magnoliopsida</taxon>
        <taxon>Liliopsida</taxon>
        <taxon>Poales</taxon>
        <taxon>Poaceae</taxon>
        <taxon>BOP clade</taxon>
        <taxon>Oryzoideae</taxon>
        <taxon>Oryzeae</taxon>
        <taxon>Oryzinae</taxon>
        <taxon>Oryza</taxon>
        <taxon>Oryza sativa</taxon>
    </lineage>
</organism>
<comment type="function">
    <text evidence="1">Catalyzes the demethylation of isoprenylcysteine methylesters.</text>
</comment>
<comment type="catalytic activity">
    <reaction>
        <text>[protein]-C-terminal S-[(2E,6E)-farnesyl]-L-cysteine methyl ester + H2O = [protein]-C-terminal S-[(2E,6E)-farnesyl]-L-cysteine + methanol + H(+)</text>
        <dbReference type="Rhea" id="RHEA:48520"/>
        <dbReference type="Rhea" id="RHEA-COMP:12125"/>
        <dbReference type="Rhea" id="RHEA-COMP:12126"/>
        <dbReference type="ChEBI" id="CHEBI:15377"/>
        <dbReference type="ChEBI" id="CHEBI:15378"/>
        <dbReference type="ChEBI" id="CHEBI:17790"/>
        <dbReference type="ChEBI" id="CHEBI:90510"/>
        <dbReference type="ChEBI" id="CHEBI:90511"/>
        <dbReference type="EC" id="3.1.1.n2"/>
    </reaction>
</comment>
<comment type="subcellular location">
    <subcellularLocation>
        <location>Endoplasmic reticulum membrane</location>
    </subcellularLocation>
    <subcellularLocation>
        <location evidence="1">Golgi apparatus membrane</location>
        <topology evidence="1">Multi-pass membrane protein</topology>
    </subcellularLocation>
</comment>
<comment type="similarity">
    <text evidence="4">Belongs to the AB hydrolase superfamily. Isoprenylcysteine methylesterase family.</text>
</comment>
<sequence>MQPASPVSGDAGPVAEAVPPRGAPQVLVRRRSVPFSPDSPLAPGSRGGGERRSTFREDVSHAAAETYLVTRLAFILLRYLGVGYRWISQLAALIIYAILLMPGFIRVGYYYFFSRQVLRSVIYGDQPRNRLDLYIPRDPKKPSPVVAFVTGGAWIIGYKAWGALLGRRLAERGIIVACIDYRNFPQGTISDMVSDASDGISFVCETVGAYGGDPNQIYLMGQSAGAHIAACALLEQAAKESRGEQISWSVTQIKAYFGLSGGYNIENLVDHFHERGLYRSIFLSIMEGKKSLPHFSPETVAKKLCPETIALLPQIVLLHGTDDYSIPFSASETFAGVLKQAGAKAKLLLYEGKTHTDVFLQDPLRGGRDKLVEDVISVIHADDADAREKDALAPIPGRLVSEWQIKLAHRISPF</sequence>
<gene>
    <name type="primary">IMCE</name>
    <name type="ordered locus">Os05g0577200</name>
    <name type="ordered locus">LOC_Os05g50170</name>
    <name type="ORF">OJ1126_B10.7</name>
</gene>
<dbReference type="EC" id="3.1.1.n2"/>
<dbReference type="EMBL" id="AC098571">
    <property type="protein sequence ID" value="AAT39150.1"/>
    <property type="molecule type" value="Genomic_DNA"/>
</dbReference>
<dbReference type="EMBL" id="AP008211">
    <property type="protein sequence ID" value="BAF18320.1"/>
    <property type="molecule type" value="Genomic_DNA"/>
</dbReference>
<dbReference type="EMBL" id="AP014961">
    <property type="protein sequence ID" value="BAS95491.1"/>
    <property type="molecule type" value="Genomic_DNA"/>
</dbReference>
<dbReference type="EMBL" id="AK069756">
    <property type="status" value="NOT_ANNOTATED_CDS"/>
    <property type="molecule type" value="mRNA"/>
</dbReference>
<dbReference type="RefSeq" id="XP_015639665.1">
    <property type="nucleotide sequence ID" value="XM_015784179.1"/>
</dbReference>
<dbReference type="RefSeq" id="XP_015639666.1">
    <property type="nucleotide sequence ID" value="XM_015784180.1"/>
</dbReference>
<dbReference type="RefSeq" id="XP_015639667.1">
    <property type="nucleotide sequence ID" value="XM_015784181.1"/>
</dbReference>
<dbReference type="RefSeq" id="XP_015639668.1">
    <property type="nucleotide sequence ID" value="XM_015784182.1"/>
</dbReference>
<dbReference type="SMR" id="Q6L5F5"/>
<dbReference type="FunCoup" id="Q6L5F5">
    <property type="interactions" value="69"/>
</dbReference>
<dbReference type="STRING" id="39947.Q6L5F5"/>
<dbReference type="ESTHER" id="orysa-Q6L5F5">
    <property type="family name" value="BD-FAE"/>
</dbReference>
<dbReference type="PaxDb" id="39947-Q6L5F5"/>
<dbReference type="EnsemblPlants" id="Os05t0577200-01">
    <property type="protein sequence ID" value="Os05t0577200-01"/>
    <property type="gene ID" value="Os05g0577200"/>
</dbReference>
<dbReference type="GeneID" id="4339700"/>
<dbReference type="Gramene" id="Os05t0577200-01">
    <property type="protein sequence ID" value="Os05t0577200-01"/>
    <property type="gene ID" value="Os05g0577200"/>
</dbReference>
<dbReference type="KEGG" id="dosa:Os05g0577200"/>
<dbReference type="eggNOG" id="KOG1516">
    <property type="taxonomic scope" value="Eukaryota"/>
</dbReference>
<dbReference type="HOGENOM" id="CLU_012494_2_4_1"/>
<dbReference type="InParanoid" id="Q6L5F5"/>
<dbReference type="OMA" id="MDHYQHE"/>
<dbReference type="OrthoDB" id="6495301at2759"/>
<dbReference type="Proteomes" id="UP000000763">
    <property type="component" value="Chromosome 5"/>
</dbReference>
<dbReference type="Proteomes" id="UP000059680">
    <property type="component" value="Chromosome 5"/>
</dbReference>
<dbReference type="GO" id="GO:0005789">
    <property type="term" value="C:endoplasmic reticulum membrane"/>
    <property type="evidence" value="ECO:0000318"/>
    <property type="project" value="GO_Central"/>
</dbReference>
<dbReference type="GO" id="GO:0000139">
    <property type="term" value="C:Golgi membrane"/>
    <property type="evidence" value="ECO:0000318"/>
    <property type="project" value="GO_Central"/>
</dbReference>
<dbReference type="GO" id="GO:0010296">
    <property type="term" value="F:prenylcysteine methylesterase activity"/>
    <property type="evidence" value="ECO:0000318"/>
    <property type="project" value="GO_Central"/>
</dbReference>
<dbReference type="FunFam" id="3.40.50.1820:FF:000084">
    <property type="entry name" value="Isoprenylcysteine alpha-carbonyl methylesterase ICME"/>
    <property type="match status" value="1"/>
</dbReference>
<dbReference type="Gene3D" id="3.40.50.1820">
    <property type="entry name" value="alpha/beta hydrolase"/>
    <property type="match status" value="1"/>
</dbReference>
<dbReference type="InterPro" id="IPR029058">
    <property type="entry name" value="AB_hydrolase_fold"/>
</dbReference>
<dbReference type="InterPro" id="IPR049492">
    <property type="entry name" value="BD-FAE-like_dom"/>
</dbReference>
<dbReference type="InterPro" id="IPR050300">
    <property type="entry name" value="GDXG_lipolytic_enzyme"/>
</dbReference>
<dbReference type="PANTHER" id="PTHR48081">
    <property type="entry name" value="AB HYDROLASE SUPERFAMILY PROTEIN C4A8.06C"/>
    <property type="match status" value="1"/>
</dbReference>
<dbReference type="PANTHER" id="PTHR48081:SF33">
    <property type="entry name" value="KYNURENINE FORMAMIDASE"/>
    <property type="match status" value="1"/>
</dbReference>
<dbReference type="Pfam" id="PF20434">
    <property type="entry name" value="BD-FAE"/>
    <property type="match status" value="1"/>
</dbReference>
<dbReference type="SUPFAM" id="SSF53474">
    <property type="entry name" value="alpha/beta-Hydrolases"/>
    <property type="match status" value="1"/>
</dbReference>
<name>IMCE_ORYSJ</name>
<protein>
    <recommendedName>
        <fullName>Probable isoprenylcysteine alpha-carbonyl methylesterase ICME</fullName>
        <ecNumber>3.1.1.n2</ecNumber>
    </recommendedName>
</protein>
<reference key="1">
    <citation type="journal article" date="2005" name="Mol. Genet. Genomics">
        <title>A fine physical map of the rice chromosome 5.</title>
        <authorList>
            <person name="Cheng C.-H."/>
            <person name="Chung M.C."/>
            <person name="Liu S.-M."/>
            <person name="Chen S.-K."/>
            <person name="Kao F.Y."/>
            <person name="Lin S.-J."/>
            <person name="Hsiao S.-H."/>
            <person name="Tseng I.C."/>
            <person name="Hsing Y.-I.C."/>
            <person name="Wu H.-P."/>
            <person name="Chen C.-S."/>
            <person name="Shaw J.-F."/>
            <person name="Wu J."/>
            <person name="Matsumoto T."/>
            <person name="Sasaki T."/>
            <person name="Chen H.-C."/>
            <person name="Chow T.-Y."/>
        </authorList>
    </citation>
    <scope>NUCLEOTIDE SEQUENCE [LARGE SCALE GENOMIC DNA]</scope>
    <source>
        <strain>cv. Nipponbare</strain>
    </source>
</reference>
<reference key="2">
    <citation type="journal article" date="2005" name="Nature">
        <title>The map-based sequence of the rice genome.</title>
        <authorList>
            <consortium name="International rice genome sequencing project (IRGSP)"/>
        </authorList>
    </citation>
    <scope>NUCLEOTIDE SEQUENCE [LARGE SCALE GENOMIC DNA]</scope>
    <source>
        <strain>cv. Nipponbare</strain>
    </source>
</reference>
<reference key="3">
    <citation type="journal article" date="2008" name="Nucleic Acids Res.">
        <title>The rice annotation project database (RAP-DB): 2008 update.</title>
        <authorList>
            <consortium name="The rice annotation project (RAP)"/>
        </authorList>
    </citation>
    <scope>GENOME REANNOTATION</scope>
    <source>
        <strain>cv. Nipponbare</strain>
    </source>
</reference>
<reference key="4">
    <citation type="journal article" date="2013" name="Rice">
        <title>Improvement of the Oryza sativa Nipponbare reference genome using next generation sequence and optical map data.</title>
        <authorList>
            <person name="Kawahara Y."/>
            <person name="de la Bastide M."/>
            <person name="Hamilton J.P."/>
            <person name="Kanamori H."/>
            <person name="McCombie W.R."/>
            <person name="Ouyang S."/>
            <person name="Schwartz D.C."/>
            <person name="Tanaka T."/>
            <person name="Wu J."/>
            <person name="Zhou S."/>
            <person name="Childs K.L."/>
            <person name="Davidson R.M."/>
            <person name="Lin H."/>
            <person name="Quesada-Ocampo L."/>
            <person name="Vaillancourt B."/>
            <person name="Sakai H."/>
            <person name="Lee S.S."/>
            <person name="Kim J."/>
            <person name="Numa H."/>
            <person name="Itoh T."/>
            <person name="Buell C.R."/>
            <person name="Matsumoto T."/>
        </authorList>
    </citation>
    <scope>GENOME REANNOTATION</scope>
    <source>
        <strain>cv. Nipponbare</strain>
    </source>
</reference>
<reference key="5">
    <citation type="journal article" date="2003" name="Science">
        <title>Collection, mapping, and annotation of over 28,000 cDNA clones from japonica rice.</title>
        <authorList>
            <consortium name="The rice full-length cDNA consortium"/>
        </authorList>
    </citation>
    <scope>NUCLEOTIDE SEQUENCE [LARGE SCALE MRNA]</scope>
    <source>
        <strain>cv. Nipponbare</strain>
    </source>
</reference>
<accession>Q6L5F5</accession>
<accession>A0A0P0WQP7</accession>